<name>RS14_XANOR</name>
<reference key="1">
    <citation type="journal article" date="2005" name="Nucleic Acids Res.">
        <title>The genome sequence of Xanthomonas oryzae pathovar oryzae KACC10331, the bacterial blight pathogen of rice.</title>
        <authorList>
            <person name="Lee B.-M."/>
            <person name="Park Y.-J."/>
            <person name="Park D.-S."/>
            <person name="Kang H.-W."/>
            <person name="Kim J.-G."/>
            <person name="Song E.-S."/>
            <person name="Park I.-C."/>
            <person name="Yoon U.-H."/>
            <person name="Hahn J.-H."/>
            <person name="Koo B.-S."/>
            <person name="Lee G.-B."/>
            <person name="Kim H."/>
            <person name="Park H.-S."/>
            <person name="Yoon K.-O."/>
            <person name="Kim J.-H."/>
            <person name="Jung C.-H."/>
            <person name="Koh N.-H."/>
            <person name="Seo J.-S."/>
            <person name="Go S.-J."/>
        </authorList>
    </citation>
    <scope>NUCLEOTIDE SEQUENCE [LARGE SCALE GENOMIC DNA]</scope>
    <source>
        <strain>KACC10331 / KXO85</strain>
    </source>
</reference>
<accession>Q5GWU8</accession>
<gene>
    <name evidence="1" type="primary">rpsN</name>
    <name type="ordered locus">XOO3569</name>
</gene>
<keyword id="KW-1185">Reference proteome</keyword>
<keyword id="KW-0687">Ribonucleoprotein</keyword>
<keyword id="KW-0689">Ribosomal protein</keyword>
<keyword id="KW-0694">RNA-binding</keyword>
<keyword id="KW-0699">rRNA-binding</keyword>
<evidence type="ECO:0000255" key="1">
    <source>
        <dbReference type="HAMAP-Rule" id="MF_00537"/>
    </source>
</evidence>
<evidence type="ECO:0000256" key="2">
    <source>
        <dbReference type="SAM" id="MobiDB-lite"/>
    </source>
</evidence>
<evidence type="ECO:0000305" key="3"/>
<protein>
    <recommendedName>
        <fullName evidence="1">Small ribosomal subunit protein uS14</fullName>
    </recommendedName>
    <alternativeName>
        <fullName evidence="3">30S ribosomal protein S14</fullName>
    </alternativeName>
</protein>
<organism>
    <name type="scientific">Xanthomonas oryzae pv. oryzae (strain KACC10331 / KXO85)</name>
    <dbReference type="NCBI Taxonomy" id="291331"/>
    <lineage>
        <taxon>Bacteria</taxon>
        <taxon>Pseudomonadati</taxon>
        <taxon>Pseudomonadota</taxon>
        <taxon>Gammaproteobacteria</taxon>
        <taxon>Lysobacterales</taxon>
        <taxon>Lysobacteraceae</taxon>
        <taxon>Xanthomonas</taxon>
    </lineage>
</organism>
<feature type="chain" id="PRO_1000128645" description="Small ribosomal subunit protein uS14">
    <location>
        <begin position="1"/>
        <end position="101"/>
    </location>
</feature>
<feature type="region of interest" description="Disordered" evidence="2">
    <location>
        <begin position="33"/>
        <end position="69"/>
    </location>
</feature>
<feature type="compositionally biased region" description="Basic and acidic residues" evidence="2">
    <location>
        <begin position="51"/>
        <end position="68"/>
    </location>
</feature>
<comment type="function">
    <text evidence="1">Binds 16S rRNA, required for the assembly of 30S particles and may also be responsible for determining the conformation of the 16S rRNA at the A site.</text>
</comment>
<comment type="subunit">
    <text evidence="1">Part of the 30S ribosomal subunit. Contacts proteins S3 and S10.</text>
</comment>
<comment type="similarity">
    <text evidence="1">Belongs to the universal ribosomal protein uS14 family.</text>
</comment>
<sequence>MAKTSMIHRDIKRAKLAKKFAGKRDALKKILSSQDASYEEKIDASTKLQKLPRDSSPSRHRNRCELSGRPRGVYRKFGLGRNMLRKATMNGDVPGLRKASW</sequence>
<proteinExistence type="inferred from homology"/>
<dbReference type="EMBL" id="AE013598">
    <property type="protein sequence ID" value="AAW76823.1"/>
    <property type="molecule type" value="Genomic_DNA"/>
</dbReference>
<dbReference type="SMR" id="Q5GWU8"/>
<dbReference type="STRING" id="291331.XOO3569"/>
<dbReference type="KEGG" id="xoo:XOO3569"/>
<dbReference type="HOGENOM" id="CLU_139869_0_1_6"/>
<dbReference type="Proteomes" id="UP000006735">
    <property type="component" value="Chromosome"/>
</dbReference>
<dbReference type="GO" id="GO:0005737">
    <property type="term" value="C:cytoplasm"/>
    <property type="evidence" value="ECO:0007669"/>
    <property type="project" value="UniProtKB-ARBA"/>
</dbReference>
<dbReference type="GO" id="GO:0015935">
    <property type="term" value="C:small ribosomal subunit"/>
    <property type="evidence" value="ECO:0007669"/>
    <property type="project" value="TreeGrafter"/>
</dbReference>
<dbReference type="GO" id="GO:0019843">
    <property type="term" value="F:rRNA binding"/>
    <property type="evidence" value="ECO:0007669"/>
    <property type="project" value="UniProtKB-UniRule"/>
</dbReference>
<dbReference type="GO" id="GO:0003735">
    <property type="term" value="F:structural constituent of ribosome"/>
    <property type="evidence" value="ECO:0007669"/>
    <property type="project" value="InterPro"/>
</dbReference>
<dbReference type="GO" id="GO:0006412">
    <property type="term" value="P:translation"/>
    <property type="evidence" value="ECO:0007669"/>
    <property type="project" value="UniProtKB-UniRule"/>
</dbReference>
<dbReference type="FunFam" id="1.10.287.1480:FF:000001">
    <property type="entry name" value="30S ribosomal protein S14"/>
    <property type="match status" value="1"/>
</dbReference>
<dbReference type="Gene3D" id="1.10.287.1480">
    <property type="match status" value="1"/>
</dbReference>
<dbReference type="HAMAP" id="MF_00537">
    <property type="entry name" value="Ribosomal_uS14_1"/>
    <property type="match status" value="1"/>
</dbReference>
<dbReference type="InterPro" id="IPR001209">
    <property type="entry name" value="Ribosomal_uS14"/>
</dbReference>
<dbReference type="InterPro" id="IPR023036">
    <property type="entry name" value="Ribosomal_uS14_bac/plastid"/>
</dbReference>
<dbReference type="NCBIfam" id="NF006477">
    <property type="entry name" value="PRK08881.1"/>
    <property type="match status" value="1"/>
</dbReference>
<dbReference type="PANTHER" id="PTHR19836">
    <property type="entry name" value="30S RIBOSOMAL PROTEIN S14"/>
    <property type="match status" value="1"/>
</dbReference>
<dbReference type="PANTHER" id="PTHR19836:SF19">
    <property type="entry name" value="SMALL RIBOSOMAL SUBUNIT PROTEIN US14M"/>
    <property type="match status" value="1"/>
</dbReference>
<dbReference type="Pfam" id="PF00253">
    <property type="entry name" value="Ribosomal_S14"/>
    <property type="match status" value="1"/>
</dbReference>
<dbReference type="SUPFAM" id="SSF57716">
    <property type="entry name" value="Glucocorticoid receptor-like (DNA-binding domain)"/>
    <property type="match status" value="1"/>
</dbReference>